<sequence>MPRRREVPKREVLPDPKFGNVDVAKFMNMLMLSGKKSVAERIVYGAFEQIQTKGGKDPLEVFTVALNNVKPVVEVKSRRVGGANYQVPVEVRPSRRMALAMRWLREAAKKRSEKSMALRLAGELSEAAEGRGGAMKKRDEVHRMAEANRAFSHFRF</sequence>
<gene>
    <name evidence="1" type="primary">rpsG</name>
    <name type="ordered locus">BceJ2315_02330</name>
    <name type="ORF">BCAL0230</name>
</gene>
<keyword id="KW-0687">Ribonucleoprotein</keyword>
<keyword id="KW-0689">Ribosomal protein</keyword>
<keyword id="KW-0694">RNA-binding</keyword>
<keyword id="KW-0699">rRNA-binding</keyword>
<keyword id="KW-0820">tRNA-binding</keyword>
<dbReference type="EMBL" id="AM747720">
    <property type="protein sequence ID" value="CAR50541.1"/>
    <property type="molecule type" value="Genomic_DNA"/>
</dbReference>
<dbReference type="RefSeq" id="WP_006477195.1">
    <property type="nucleotide sequence ID" value="NC_011000.1"/>
</dbReference>
<dbReference type="SMR" id="B4E5B6"/>
<dbReference type="GeneID" id="93193455"/>
<dbReference type="KEGG" id="bcj:BCAL0230"/>
<dbReference type="eggNOG" id="COG0049">
    <property type="taxonomic scope" value="Bacteria"/>
</dbReference>
<dbReference type="HOGENOM" id="CLU_072226_1_1_4"/>
<dbReference type="BioCyc" id="BCEN216591:G1G1V-273-MONOMER"/>
<dbReference type="Proteomes" id="UP000001035">
    <property type="component" value="Chromosome 1"/>
</dbReference>
<dbReference type="GO" id="GO:0015935">
    <property type="term" value="C:small ribosomal subunit"/>
    <property type="evidence" value="ECO:0007669"/>
    <property type="project" value="InterPro"/>
</dbReference>
<dbReference type="GO" id="GO:0019843">
    <property type="term" value="F:rRNA binding"/>
    <property type="evidence" value="ECO:0007669"/>
    <property type="project" value="UniProtKB-UniRule"/>
</dbReference>
<dbReference type="GO" id="GO:0003735">
    <property type="term" value="F:structural constituent of ribosome"/>
    <property type="evidence" value="ECO:0007669"/>
    <property type="project" value="InterPro"/>
</dbReference>
<dbReference type="GO" id="GO:0000049">
    <property type="term" value="F:tRNA binding"/>
    <property type="evidence" value="ECO:0007669"/>
    <property type="project" value="UniProtKB-UniRule"/>
</dbReference>
<dbReference type="GO" id="GO:0006412">
    <property type="term" value="P:translation"/>
    <property type="evidence" value="ECO:0007669"/>
    <property type="project" value="UniProtKB-UniRule"/>
</dbReference>
<dbReference type="CDD" id="cd14869">
    <property type="entry name" value="uS7_Bacteria"/>
    <property type="match status" value="1"/>
</dbReference>
<dbReference type="FunFam" id="1.10.455.10:FF:000001">
    <property type="entry name" value="30S ribosomal protein S7"/>
    <property type="match status" value="1"/>
</dbReference>
<dbReference type="Gene3D" id="1.10.455.10">
    <property type="entry name" value="Ribosomal protein S7 domain"/>
    <property type="match status" value="1"/>
</dbReference>
<dbReference type="HAMAP" id="MF_00480_B">
    <property type="entry name" value="Ribosomal_uS7_B"/>
    <property type="match status" value="1"/>
</dbReference>
<dbReference type="InterPro" id="IPR000235">
    <property type="entry name" value="Ribosomal_uS7"/>
</dbReference>
<dbReference type="InterPro" id="IPR005717">
    <property type="entry name" value="Ribosomal_uS7_bac/org-type"/>
</dbReference>
<dbReference type="InterPro" id="IPR020606">
    <property type="entry name" value="Ribosomal_uS7_CS"/>
</dbReference>
<dbReference type="InterPro" id="IPR023798">
    <property type="entry name" value="Ribosomal_uS7_dom"/>
</dbReference>
<dbReference type="InterPro" id="IPR036823">
    <property type="entry name" value="Ribosomal_uS7_dom_sf"/>
</dbReference>
<dbReference type="NCBIfam" id="TIGR01029">
    <property type="entry name" value="rpsG_bact"/>
    <property type="match status" value="1"/>
</dbReference>
<dbReference type="PANTHER" id="PTHR11205">
    <property type="entry name" value="RIBOSOMAL PROTEIN S7"/>
    <property type="match status" value="1"/>
</dbReference>
<dbReference type="Pfam" id="PF00177">
    <property type="entry name" value="Ribosomal_S7"/>
    <property type="match status" value="1"/>
</dbReference>
<dbReference type="PIRSF" id="PIRSF002122">
    <property type="entry name" value="RPS7p_RPS7a_RPS5e_RPS7o"/>
    <property type="match status" value="1"/>
</dbReference>
<dbReference type="SUPFAM" id="SSF47973">
    <property type="entry name" value="Ribosomal protein S7"/>
    <property type="match status" value="1"/>
</dbReference>
<dbReference type="PROSITE" id="PS00052">
    <property type="entry name" value="RIBOSOMAL_S7"/>
    <property type="match status" value="1"/>
</dbReference>
<protein>
    <recommendedName>
        <fullName evidence="1">Small ribosomal subunit protein uS7</fullName>
    </recommendedName>
    <alternativeName>
        <fullName evidence="2">30S ribosomal protein S7</fullName>
    </alternativeName>
</protein>
<feature type="chain" id="PRO_1000125907" description="Small ribosomal subunit protein uS7">
    <location>
        <begin position="1"/>
        <end position="156"/>
    </location>
</feature>
<comment type="function">
    <text evidence="1">One of the primary rRNA binding proteins, it binds directly to 16S rRNA where it nucleates assembly of the head domain of the 30S subunit. Is located at the subunit interface close to the decoding center, probably blocks exit of the E-site tRNA.</text>
</comment>
<comment type="subunit">
    <text evidence="1">Part of the 30S ribosomal subunit. Contacts proteins S9 and S11.</text>
</comment>
<comment type="similarity">
    <text evidence="1">Belongs to the universal ribosomal protein uS7 family.</text>
</comment>
<accession>B4E5B6</accession>
<reference key="1">
    <citation type="journal article" date="2009" name="J. Bacteriol.">
        <title>The genome of Burkholderia cenocepacia J2315, an epidemic pathogen of cystic fibrosis patients.</title>
        <authorList>
            <person name="Holden M.T."/>
            <person name="Seth-Smith H.M."/>
            <person name="Crossman L.C."/>
            <person name="Sebaihia M."/>
            <person name="Bentley S.D."/>
            <person name="Cerdeno-Tarraga A.M."/>
            <person name="Thomson N.R."/>
            <person name="Bason N."/>
            <person name="Quail M.A."/>
            <person name="Sharp S."/>
            <person name="Cherevach I."/>
            <person name="Churcher C."/>
            <person name="Goodhead I."/>
            <person name="Hauser H."/>
            <person name="Holroyd N."/>
            <person name="Mungall K."/>
            <person name="Scott P."/>
            <person name="Walker D."/>
            <person name="White B."/>
            <person name="Rose H."/>
            <person name="Iversen P."/>
            <person name="Mil-Homens D."/>
            <person name="Rocha E.P."/>
            <person name="Fialho A.M."/>
            <person name="Baldwin A."/>
            <person name="Dowson C."/>
            <person name="Barrell B.G."/>
            <person name="Govan J.R."/>
            <person name="Vandamme P."/>
            <person name="Hart C.A."/>
            <person name="Mahenthiralingam E."/>
            <person name="Parkhill J."/>
        </authorList>
    </citation>
    <scope>NUCLEOTIDE SEQUENCE [LARGE SCALE GENOMIC DNA]</scope>
    <source>
        <strain>ATCC BAA-245 / DSM 16553 / LMG 16656 / NCTC 13227 / J2315 / CF5610</strain>
    </source>
</reference>
<name>RS7_BURCJ</name>
<evidence type="ECO:0000255" key="1">
    <source>
        <dbReference type="HAMAP-Rule" id="MF_00480"/>
    </source>
</evidence>
<evidence type="ECO:0000305" key="2"/>
<organism>
    <name type="scientific">Burkholderia cenocepacia (strain ATCC BAA-245 / DSM 16553 / LMG 16656 / NCTC 13227 / J2315 / CF5610)</name>
    <name type="common">Burkholderia cepacia (strain J2315)</name>
    <dbReference type="NCBI Taxonomy" id="216591"/>
    <lineage>
        <taxon>Bacteria</taxon>
        <taxon>Pseudomonadati</taxon>
        <taxon>Pseudomonadota</taxon>
        <taxon>Betaproteobacteria</taxon>
        <taxon>Burkholderiales</taxon>
        <taxon>Burkholderiaceae</taxon>
        <taxon>Burkholderia</taxon>
        <taxon>Burkholderia cepacia complex</taxon>
    </lineage>
</organism>
<proteinExistence type="inferred from homology"/>